<sequence>ACSTPHYDLPLICAATWTATCVPRQTSAARCGPCPRHDPHPSAPLPLPAPHAVDPASRERLLCFSPACFSHSLYLFLNNKNTETLIITAVCFIRVSRCRKKREGSPKYSVSLTRAY</sequence>
<feature type="chain" id="PRO_0000115340" description="Uncharacterized protein UL81">
    <location>
        <begin position="1"/>
        <end position="116"/>
    </location>
</feature>
<name>UL81_HCMVA</name>
<protein>
    <recommendedName>
        <fullName>Uncharacterized protein UL81</fullName>
    </recommendedName>
</protein>
<gene>
    <name type="primary">UL81</name>
</gene>
<accession>P16825</accession>
<organismHost>
    <name type="scientific">Homo sapiens</name>
    <name type="common">Human</name>
    <dbReference type="NCBI Taxonomy" id="9606"/>
</organismHost>
<reference key="1">
    <citation type="journal article" date="1990" name="Curr. Top. Microbiol. Immunol.">
        <title>Analysis of the protein-coding content of the sequence of human cytomegalovirus strain AD169.</title>
        <authorList>
            <person name="Chee M.S."/>
            <person name="Bankier A.T."/>
            <person name="Beck S."/>
            <person name="Bohni R."/>
            <person name="Brown C.M."/>
            <person name="Cerny R."/>
            <person name="Horsnell T."/>
            <person name="Hutchison C.A. III"/>
            <person name="Kouzarides T."/>
            <person name="Martignetti J.A."/>
            <person name="Preddie E."/>
            <person name="Satchwell S.C."/>
            <person name="Tomlinson P."/>
            <person name="Weston K.M."/>
            <person name="Barrell B.G."/>
        </authorList>
    </citation>
    <scope>NUCLEOTIDE SEQUENCE [LARGE SCALE GENOMIC DNA]</scope>
</reference>
<proteinExistence type="predicted"/>
<dbReference type="EMBL" id="X17403">
    <property type="protein sequence ID" value="CAA35355.1"/>
    <property type="molecule type" value="Genomic_DNA"/>
</dbReference>
<dbReference type="PIR" id="S09845">
    <property type="entry name" value="S09845"/>
</dbReference>
<dbReference type="Proteomes" id="UP000008991">
    <property type="component" value="Segment"/>
</dbReference>
<organism>
    <name type="scientific">Human cytomegalovirus (strain AD169)</name>
    <name type="common">HHV-5</name>
    <name type="synonym">Human herpesvirus 5</name>
    <dbReference type="NCBI Taxonomy" id="10360"/>
    <lineage>
        <taxon>Viruses</taxon>
        <taxon>Duplodnaviria</taxon>
        <taxon>Heunggongvirae</taxon>
        <taxon>Peploviricota</taxon>
        <taxon>Herviviricetes</taxon>
        <taxon>Herpesvirales</taxon>
        <taxon>Orthoherpesviridae</taxon>
        <taxon>Betaherpesvirinae</taxon>
        <taxon>Cytomegalovirus</taxon>
        <taxon>Cytomegalovirus humanbeta5</taxon>
        <taxon>Human cytomegalovirus</taxon>
    </lineage>
</organism>